<sequence length="335" mass="36221">MKFSRSIQAIDSHTAGEATRIVVGGIPNIKGNSMPEKKEYLEENLDYLRTAIMLEPRGHNDMFGSVMTQPCCPDADFGIIFMDGGGYLNMCGHGTIGAMTAAIETGVVPAVEPVTHVVMEAPAGIIRGDVTVVDGKAKEVSFLNVPAFLYKEGVEVDLPGVGTVKFDISFGGSFFAIIHASQLGLKIEPQNAGKLTELAMKLRDIINEKIEIQHPTLAHIKTVDLVEIYDEPTHPEATYKNVVIFGQGQVDRSPCGTGTSAKLATLHAKGELKVGEKFVYESILGTLFKGEIVEETKVADFNAVVPKITGSAYITGFNHFVIDEEDPLKHGFILK</sequence>
<keyword id="KW-0413">Isomerase</keyword>
<keyword id="KW-1185">Reference proteome</keyword>
<gene>
    <name type="ordered locus">CD630_32370</name>
</gene>
<name>PRAC_CLOD6</name>
<feature type="chain" id="PRO_0000354023" description="Proline racemase">
    <location>
        <begin position="1"/>
        <end position="335"/>
    </location>
</feature>
<feature type="active site" description="Proton acceptor" evidence="3">
    <location>
        <position position="91"/>
    </location>
</feature>
<feature type="active site" description="Proton donor" evidence="3">
    <location>
        <position position="255"/>
    </location>
</feature>
<reference key="1">
    <citation type="journal article" date="2006" name="Nat. Genet.">
        <title>The multidrug-resistant human pathogen Clostridium difficile has a highly mobile, mosaic genome.</title>
        <authorList>
            <person name="Sebaihia M."/>
            <person name="Wren B.W."/>
            <person name="Mullany P."/>
            <person name="Fairweather N.F."/>
            <person name="Minton N."/>
            <person name="Stabler R."/>
            <person name="Thomson N.R."/>
            <person name="Roberts A.P."/>
            <person name="Cerdeno-Tarraga A.M."/>
            <person name="Wang H."/>
            <person name="Holden M.T.G."/>
            <person name="Wright A."/>
            <person name="Churcher C."/>
            <person name="Quail M.A."/>
            <person name="Baker S."/>
            <person name="Bason N."/>
            <person name="Brooks K."/>
            <person name="Chillingworth T."/>
            <person name="Cronin A."/>
            <person name="Davis P."/>
            <person name="Dowd L."/>
            <person name="Fraser A."/>
            <person name="Feltwell T."/>
            <person name="Hance Z."/>
            <person name="Holroyd S."/>
            <person name="Jagels K."/>
            <person name="Moule S."/>
            <person name="Mungall K."/>
            <person name="Price C."/>
            <person name="Rabbinowitsch E."/>
            <person name="Sharp S."/>
            <person name="Simmonds M."/>
            <person name="Stevens K."/>
            <person name="Unwin L."/>
            <person name="Whithead S."/>
            <person name="Dupuy B."/>
            <person name="Dougan G."/>
            <person name="Barrell B."/>
            <person name="Parkhill J."/>
        </authorList>
    </citation>
    <scope>NUCLEOTIDE SEQUENCE [LARGE SCALE GENOMIC DNA]</scope>
    <source>
        <strain>630</strain>
    </source>
</reference>
<dbReference type="EC" id="5.1.1.4"/>
<dbReference type="EMBL" id="AM180355">
    <property type="protein sequence ID" value="CAJ70135.1"/>
    <property type="molecule type" value="Genomic_DNA"/>
</dbReference>
<dbReference type="RefSeq" id="WP_003422090.1">
    <property type="nucleotide sequence ID" value="NZ_JAUPES010000002.1"/>
</dbReference>
<dbReference type="RefSeq" id="YP_001089754.1">
    <property type="nucleotide sequence ID" value="NC_009089.1"/>
</dbReference>
<dbReference type="SMR" id="Q17ZY4"/>
<dbReference type="STRING" id="272563.CD630_32370"/>
<dbReference type="EnsemblBacteria" id="CAJ70135">
    <property type="protein sequence ID" value="CAJ70135"/>
    <property type="gene ID" value="CD630_32370"/>
</dbReference>
<dbReference type="KEGG" id="cdf:CD630_32370"/>
<dbReference type="KEGG" id="pdc:CDIF630_03533"/>
<dbReference type="PATRIC" id="fig|272563.120.peg.3419"/>
<dbReference type="eggNOG" id="COG3938">
    <property type="taxonomic scope" value="Bacteria"/>
</dbReference>
<dbReference type="OrthoDB" id="181267at2"/>
<dbReference type="PhylomeDB" id="Q17ZY4"/>
<dbReference type="BioCyc" id="PDIF272563:G12WB-3404-MONOMER"/>
<dbReference type="BRENDA" id="5.1.1.4">
    <property type="organism ID" value="1473"/>
</dbReference>
<dbReference type="Proteomes" id="UP000001978">
    <property type="component" value="Chromosome"/>
</dbReference>
<dbReference type="GO" id="GO:0047580">
    <property type="term" value="F:4-hydroxyproline epimerase activity"/>
    <property type="evidence" value="ECO:0007669"/>
    <property type="project" value="TreeGrafter"/>
</dbReference>
<dbReference type="GO" id="GO:0018112">
    <property type="term" value="F:proline racemase activity"/>
    <property type="evidence" value="ECO:0007669"/>
    <property type="project" value="UniProtKB-EC"/>
</dbReference>
<dbReference type="FunFam" id="3.10.310.10:FF:000005">
    <property type="entry name" value="Proline racemase"/>
    <property type="match status" value="1"/>
</dbReference>
<dbReference type="Gene3D" id="3.10.310.10">
    <property type="entry name" value="Diaminopimelate Epimerase, Chain A, domain 1"/>
    <property type="match status" value="2"/>
</dbReference>
<dbReference type="InterPro" id="IPR008794">
    <property type="entry name" value="Pro_racemase_fam"/>
</dbReference>
<dbReference type="NCBIfam" id="NF010576">
    <property type="entry name" value="PRK13969.1"/>
    <property type="match status" value="1"/>
</dbReference>
<dbReference type="PANTHER" id="PTHR33442:SF5">
    <property type="entry name" value="BIFUNCTIONAL TRANS-3-HYDROXY-L-PROLINE DEHYDRATASE_2-EPIMERASE"/>
    <property type="match status" value="1"/>
</dbReference>
<dbReference type="PANTHER" id="PTHR33442">
    <property type="entry name" value="TRANS-3-HYDROXY-L-PROLINE DEHYDRATASE"/>
    <property type="match status" value="1"/>
</dbReference>
<dbReference type="Pfam" id="PF05544">
    <property type="entry name" value="Pro_racemase"/>
    <property type="match status" value="1"/>
</dbReference>
<dbReference type="PIRSF" id="PIRSF029792">
    <property type="entry name" value="Pro_racemase"/>
    <property type="match status" value="1"/>
</dbReference>
<dbReference type="SFLD" id="SFLDS00028">
    <property type="entry name" value="Proline_Racemase"/>
    <property type="match status" value="1"/>
</dbReference>
<dbReference type="SUPFAM" id="SSF54506">
    <property type="entry name" value="Diaminopimelate epimerase-like"/>
    <property type="match status" value="1"/>
</dbReference>
<protein>
    <recommendedName>
        <fullName>Proline racemase</fullName>
        <ecNumber>5.1.1.4</ecNumber>
    </recommendedName>
</protein>
<organism>
    <name type="scientific">Clostridioides difficile (strain 630)</name>
    <name type="common">Peptoclostridium difficile</name>
    <dbReference type="NCBI Taxonomy" id="272563"/>
    <lineage>
        <taxon>Bacteria</taxon>
        <taxon>Bacillati</taxon>
        <taxon>Bacillota</taxon>
        <taxon>Clostridia</taxon>
        <taxon>Peptostreptococcales</taxon>
        <taxon>Peptostreptococcaceae</taxon>
        <taxon>Clostridioides</taxon>
    </lineage>
</organism>
<proteinExistence type="inferred from homology"/>
<comment type="function">
    <text evidence="2">Catalyzes the reversible interconversion of L- and D-proline. Plays an important role in the regulation of intra- and extracellular amino acid pools, allowing the bacterium to profit from host precursors and enzymatic pathways. Strong B-cell mitogen.</text>
</comment>
<comment type="catalytic activity">
    <reaction>
        <text>L-proline = D-proline</text>
        <dbReference type="Rhea" id="RHEA:10680"/>
        <dbReference type="ChEBI" id="CHEBI:57726"/>
        <dbReference type="ChEBI" id="CHEBI:60039"/>
        <dbReference type="EC" id="5.1.1.4"/>
    </reaction>
</comment>
<comment type="subunit">
    <text evidence="1">Homodimer.</text>
</comment>
<comment type="similarity">
    <text evidence="4">Belongs to the proline racemase family.</text>
</comment>
<accession>Q17ZY4</accession>
<evidence type="ECO:0000250" key="1"/>
<evidence type="ECO:0000250" key="2">
    <source>
        <dbReference type="UniProtKB" id="A8DEZ8"/>
    </source>
</evidence>
<evidence type="ECO:0000250" key="3">
    <source>
        <dbReference type="UniProtKB" id="Q4KGU2"/>
    </source>
</evidence>
<evidence type="ECO:0000305" key="4"/>